<feature type="chain" id="PRO_0000233967" description="Putative late blight resistance protein homolog R1B-13">
    <location>
        <begin position="1"/>
        <end position="1141"/>
    </location>
</feature>
<feature type="domain" description="NB-ARC">
    <location>
        <begin position="516"/>
        <end position="742"/>
    </location>
</feature>
<feature type="repeat" description="LRR 1">
    <location>
        <begin position="826"/>
        <end position="851"/>
    </location>
</feature>
<feature type="repeat" description="LRR 2">
    <location>
        <begin position="869"/>
        <end position="894"/>
    </location>
</feature>
<feature type="repeat" description="LRR 3">
    <location>
        <begin position="992"/>
        <end position="1016"/>
    </location>
</feature>
<feature type="repeat" description="LRR 4">
    <location>
        <begin position="1017"/>
        <end position="1041"/>
    </location>
</feature>
<feature type="repeat" description="LRR 5">
    <location>
        <begin position="1043"/>
        <end position="1068"/>
    </location>
</feature>
<feature type="coiled-coil region" evidence="2">
    <location>
        <begin position="417"/>
        <end position="437"/>
    </location>
</feature>
<comment type="function">
    <text>Confers resistance to late blight (Phytophthora infestans) races carrying the avirulence gene Avr1. Resistance proteins guard the plant against pathogens that contain an appropriate avirulence protein via an indirect interaction with this avirulence protein. That triggers a defense system including the hypersensitive response, which restricts the pathogen growth.</text>
</comment>
<comment type="subcellular location">
    <subcellularLocation>
        <location evidence="1">Cytoplasm</location>
    </subcellularLocation>
    <subcellularLocation>
        <location evidence="1">Membrane</location>
        <topology evidence="1">Peripheral membrane protein</topology>
    </subcellularLocation>
</comment>
<comment type="miscellaneous">
    <text>This protein is encoded by the haplotype B genome of the allohexaploid Solanum demissum.</text>
</comment>
<comment type="similarity">
    <text evidence="3">Belongs to the disease resistance NB-LRR family.</text>
</comment>
<sequence length="1141" mass="132370">MTKRVITDRLRSTLQDSNYSDVGRDLINFILWELKFLDCFLHLKSLPFASECCMLDVSQKMIEILKSRILSICPDSGIQLWKGNLSMKTLYLEDVRVTLDSFGYWKEVIWKTKQEFSAEYSFPNTSLAANKVDDVSPKFVMEVIDVFVENLNVVVKINDPISWLFVPEHKEQIEQVLKELKLLRFFVWFVSNKYIEPQYQHTTFYIHALIEASHISMAVWLHLPVCSKGNQNLAPSEVSRLLSDFVEMKIKATEPGISRNNIYIDVLQDLKLTIPQAQKKHAAESGIVEILTHSMMVGLSDQMANLQEMLCLLRDNLIHLPILDLEFHLQDMDSIIVDAGLLIYSLYDIKGEKEDTTLEDINRELGFDLPRNIEPIKVIVYLVMQKAFQCNLPRIHGLGYVDFLLKNLKDFQGRYSDSLAFLKNQIQVIQMEFEILQPFLKVVVEEPHNKFKRLNEDCAIQIIRKAHEVEYVVDACINKGIPHWCLERWLQDIIEETTCIKAKIQEKNTVEDTMKTVITHTSSQLARTPRMNEEIVWFKDVIENLRNRLLNGTKGQDVISIHSMPGLGKTTLANRLYSDRSIVSQFDICAQCCVSQVYSYKELLLALLCDAIGEGSDQHREIHANELADMLRKTLLPRRYLILVDDVWENSAWDDLRGCFPDVNNRSRIILTTRHHEVAKYASVHSEPLHLRMFEEDESWKLLEKRVFGEESCSPLLKDVGLRIAKMCRQLPLSIVLVADVLLDFCKERAAEENFLLWIKRDQITKAAYSHKQHTHLALTEMDTLLEWSTSGSLVGSVLFKNYDPYFVRSLLSSHAFEISHILPHFKFLKVLDLEHQVVIDFIPTELPYLRYFSALIHQNSIPSSISNLWNLETLILKGTSAKTLLLPSTVWDMVKLGYLYIPNFSPENKKALLENSPKLDDLETLSNPYFARVEDAELMLRKTPNLRKLICEVECLEYPHQYHVLNFPVQLEILKFYRSKASKTIPFCISAPNLKYLKLSGYYLDSQYLSETVDHLKHLEVLKLYNVEFGDYREWEVSNGKFPQLKILKLENLSLMKWIVADDAFPILEQLVLHDCRDLMEIPSCFMDILSLKYIEVDMSNKSVVKSAKNIEETQVEDNQNTNFKLVIIKVHYWEKLYSA</sequence>
<name>R1B13_SOLDE</name>
<gene>
    <name type="primary">R1B-13</name>
    <name type="ORF">PGEC872C13.7</name>
</gene>
<accession>Q6L3Z0</accession>
<keyword id="KW-0067">ATP-binding</keyword>
<keyword id="KW-0175">Coiled coil</keyword>
<keyword id="KW-0963">Cytoplasm</keyword>
<keyword id="KW-0381">Hypersensitive response</keyword>
<keyword id="KW-0433">Leucine-rich repeat</keyword>
<keyword id="KW-0472">Membrane</keyword>
<keyword id="KW-0547">Nucleotide-binding</keyword>
<keyword id="KW-0611">Plant defense</keyword>
<keyword id="KW-0677">Repeat</keyword>
<reference key="1">
    <citation type="journal article" date="2005" name="Plant J.">
        <title>The R1 resistance gene cluster contains three groups of independently evolving, type I R1 homologues and shows substantial structural variation among haplotypes of Solanum demissum.</title>
        <authorList>
            <person name="Kuang H."/>
            <person name="Wei F."/>
            <person name="Marano M.R."/>
            <person name="Wirtz U."/>
            <person name="Wang X."/>
            <person name="Liu J."/>
            <person name="Shum W.P."/>
            <person name="Zaborsky J."/>
            <person name="Tallon L.J."/>
            <person name="Rensink W."/>
            <person name="Lobst S."/>
            <person name="Zhang P."/>
            <person name="Tornqvist C.-E."/>
            <person name="Tek A."/>
            <person name="Bamberg J."/>
            <person name="Helgeson J."/>
            <person name="Fry W."/>
            <person name="You F."/>
            <person name="Luo M.-C."/>
            <person name="Jiang J."/>
            <person name="Buell C.R."/>
            <person name="Baker B."/>
        </authorList>
    </citation>
    <scope>NUCLEOTIDE SEQUENCE [GENOMIC DNA]</scope>
</reference>
<protein>
    <recommendedName>
        <fullName>Putative late blight resistance protein homolog R1B-13</fullName>
    </recommendedName>
</protein>
<dbReference type="EMBL" id="AC149266">
    <property type="protein sequence ID" value="AAT38785.1"/>
    <property type="molecule type" value="Genomic_DNA"/>
</dbReference>
<dbReference type="SMR" id="Q6L3Z0"/>
<dbReference type="GO" id="GO:0005737">
    <property type="term" value="C:cytoplasm"/>
    <property type="evidence" value="ECO:0007669"/>
    <property type="project" value="UniProtKB-SubCell"/>
</dbReference>
<dbReference type="GO" id="GO:0016020">
    <property type="term" value="C:membrane"/>
    <property type="evidence" value="ECO:0007669"/>
    <property type="project" value="UniProtKB-SubCell"/>
</dbReference>
<dbReference type="GO" id="GO:0043531">
    <property type="term" value="F:ADP binding"/>
    <property type="evidence" value="ECO:0007669"/>
    <property type="project" value="InterPro"/>
</dbReference>
<dbReference type="GO" id="GO:0005524">
    <property type="term" value="F:ATP binding"/>
    <property type="evidence" value="ECO:0007669"/>
    <property type="project" value="UniProtKB-KW"/>
</dbReference>
<dbReference type="GO" id="GO:0009626">
    <property type="term" value="P:plant-type hypersensitive response"/>
    <property type="evidence" value="ECO:0007669"/>
    <property type="project" value="UniProtKB-KW"/>
</dbReference>
<dbReference type="CDD" id="cd14798">
    <property type="entry name" value="RX-CC_like"/>
    <property type="match status" value="1"/>
</dbReference>
<dbReference type="Gene3D" id="1.10.8.430">
    <property type="entry name" value="Helical domain of apoptotic protease-activating factors"/>
    <property type="match status" value="1"/>
</dbReference>
<dbReference type="Gene3D" id="3.40.50.300">
    <property type="entry name" value="P-loop containing nucleotide triphosphate hydrolases"/>
    <property type="match status" value="1"/>
</dbReference>
<dbReference type="Gene3D" id="3.80.10.10">
    <property type="entry name" value="Ribonuclease Inhibitor"/>
    <property type="match status" value="1"/>
</dbReference>
<dbReference type="InterPro" id="IPR042197">
    <property type="entry name" value="Apaf_helical"/>
</dbReference>
<dbReference type="InterPro" id="IPR032675">
    <property type="entry name" value="LRR_dom_sf"/>
</dbReference>
<dbReference type="InterPro" id="IPR002182">
    <property type="entry name" value="NB-ARC"/>
</dbReference>
<dbReference type="InterPro" id="IPR027417">
    <property type="entry name" value="P-loop_NTPase"/>
</dbReference>
<dbReference type="InterPro" id="IPR021929">
    <property type="entry name" value="R1A-like_N"/>
</dbReference>
<dbReference type="InterPro" id="IPR038005">
    <property type="entry name" value="RX-like_CC"/>
</dbReference>
<dbReference type="PANTHER" id="PTHR15140:SF42">
    <property type="entry name" value="LATE BLIGHT RESISTANCE PROTEIN R1-A-LIKE"/>
    <property type="match status" value="1"/>
</dbReference>
<dbReference type="PANTHER" id="PTHR15140">
    <property type="entry name" value="TUBULIN-SPECIFIC CHAPERONE E"/>
    <property type="match status" value="1"/>
</dbReference>
<dbReference type="Pfam" id="PF00931">
    <property type="entry name" value="NB-ARC"/>
    <property type="match status" value="1"/>
</dbReference>
<dbReference type="Pfam" id="PF12061">
    <property type="entry name" value="NB-LRR"/>
    <property type="match status" value="1"/>
</dbReference>
<dbReference type="PRINTS" id="PR00364">
    <property type="entry name" value="DISEASERSIST"/>
</dbReference>
<dbReference type="SUPFAM" id="SSF52058">
    <property type="entry name" value="L domain-like"/>
    <property type="match status" value="1"/>
</dbReference>
<dbReference type="SUPFAM" id="SSF52540">
    <property type="entry name" value="P-loop containing nucleoside triphosphate hydrolases"/>
    <property type="match status" value="1"/>
</dbReference>
<organism>
    <name type="scientific">Solanum demissum</name>
    <name type="common">Wild potato</name>
    <dbReference type="NCBI Taxonomy" id="50514"/>
    <lineage>
        <taxon>Eukaryota</taxon>
        <taxon>Viridiplantae</taxon>
        <taxon>Streptophyta</taxon>
        <taxon>Embryophyta</taxon>
        <taxon>Tracheophyta</taxon>
        <taxon>Spermatophyta</taxon>
        <taxon>Magnoliopsida</taxon>
        <taxon>eudicotyledons</taxon>
        <taxon>Gunneridae</taxon>
        <taxon>Pentapetalae</taxon>
        <taxon>asterids</taxon>
        <taxon>lamiids</taxon>
        <taxon>Solanales</taxon>
        <taxon>Solanaceae</taxon>
        <taxon>Solanoideae</taxon>
        <taxon>Solaneae</taxon>
        <taxon>Solanum</taxon>
    </lineage>
</organism>
<proteinExistence type="inferred from homology"/>
<evidence type="ECO:0000250" key="1"/>
<evidence type="ECO:0000255" key="2"/>
<evidence type="ECO:0000305" key="3"/>